<name>TBG1_MAIZE</name>
<feature type="chain" id="PRO_0000048471" description="Tubulin gamma-1 chain">
    <location>
        <begin position="1"/>
        <end position="469"/>
    </location>
</feature>
<feature type="binding site" evidence="2">
    <location>
        <begin position="142"/>
        <end position="148"/>
    </location>
    <ligand>
        <name>GTP</name>
        <dbReference type="ChEBI" id="CHEBI:37565"/>
    </ligand>
</feature>
<feature type="sequence conflict" description="In Ref. 2; CAA58670." evidence="3" ref="2">
    <original>Y</original>
    <variation>D</variation>
    <location>
        <position position="352"/>
    </location>
</feature>
<protein>
    <recommendedName>
        <fullName>Tubulin gamma-1 chain</fullName>
    </recommendedName>
    <alternativeName>
        <fullName>Gamma-1-tubulin</fullName>
    </alternativeName>
</protein>
<comment type="function">
    <text>Tubulin is the major constituent of microtubules. The gamma chain is found at microtubule organizing centers (MTOC) such as the spindle poles, suggesting that it is involved in the minus-end nucleation of microtubule assembly.</text>
</comment>
<comment type="subcellular location">
    <subcellularLocation>
        <location evidence="1">Cytoplasm</location>
        <location evidence="1">Cytoskeleton</location>
        <location evidence="1">Microtubule organizing center</location>
    </subcellularLocation>
</comment>
<comment type="similarity">
    <text evidence="3">Belongs to the tubulin family.</text>
</comment>
<keyword id="KW-0963">Cytoplasm</keyword>
<keyword id="KW-0206">Cytoskeleton</keyword>
<keyword id="KW-0342">GTP-binding</keyword>
<keyword id="KW-0493">Microtubule</keyword>
<keyword id="KW-0547">Nucleotide-binding</keyword>
<keyword id="KW-1185">Reference proteome</keyword>
<proteinExistence type="evidence at transcript level"/>
<evidence type="ECO:0000250" key="1">
    <source>
        <dbReference type="UniProtKB" id="P38557"/>
    </source>
</evidence>
<evidence type="ECO:0000255" key="2"/>
<evidence type="ECO:0000305" key="3"/>
<accession>Q41807</accession>
<accession>Q41873</accession>
<reference key="1">
    <citation type="journal article" date="1995" name="Plant Physiol.">
        <title>Isolation of a full-length cDNA encoding Zea mays gamma-tubulin.</title>
        <authorList>
            <person name="Lopez I."/>
            <person name="Khan S."/>
            <person name="Sevik M."/>
            <person name="Cande W.Z."/>
            <person name="Hussey P.J."/>
        </authorList>
    </citation>
    <scope>NUCLEOTIDE SEQUENCE [MRNA]</scope>
    <source>
        <strain>cv. Black Mexican Sweet</strain>
    </source>
</reference>
<reference key="2">
    <citation type="submission" date="1995-01" db="EMBL/GenBank/DDBJ databases">
        <title>Identification of two maize cDNAs encoding gamma-tubulin.</title>
        <authorList>
            <person name="Canaday J."/>
            <person name="Stoppin V."/>
            <person name="Endle M.C."/>
            <person name="Lambert A.M."/>
        </authorList>
    </citation>
    <scope>NUCLEOTIDE SEQUENCE [MRNA]</scope>
    <source>
        <strain>cv. Black Mexican Sweet</strain>
    </source>
</reference>
<sequence length="469" mass="52933">MPREIITIQVGQCGNQIGMEFWKQLCLEHGIGKDGLLEDFATQGGDRKDVFFYQADDQHFIPRSLLIDLEPRVINGIQNSEYRNLYNHENIFVAEHGGGAGNNWASGYHQGEQFVDDIMDMVDREADGSDSLEGFVLCHSIAGGTGSGMGSYLLETLNDRYSKKLVQTYSVFPNQVETSDVVVQPYNSLLTLKRLTLNADCVVVLDNTALNRIAVERLHLSNPTFAQTNSLVSTVMSASTTTLRYPGYMNNDLVGLLASLIPTPRCHFLMTGYTPLTVERQVNMIRKTTVLDVMRRLLQTKNIMVSSYARTKEASQAKYISILNIIQGEVDPTQVHESLQRIRERKLVNFIYWAPASIQVALSRKSPYVQTTHRVSGLMLANHTSIRHLFSKCLGQYEKLRKKQAFLDNYRKFPMFADNDLSEFDESREIIESLVDEYKACESPDYIKWGMEDPGEANVVAALDSKLVV</sequence>
<gene>
    <name type="primary">TUBG1</name>
    <name type="synonym">TUBC</name>
    <name type="synonym">TUBG</name>
</gene>
<dbReference type="EMBL" id="X80375">
    <property type="protein sequence ID" value="CAA56592.1"/>
    <property type="molecule type" value="mRNA"/>
</dbReference>
<dbReference type="EMBL" id="X83695">
    <property type="protein sequence ID" value="CAA58670.1"/>
    <property type="molecule type" value="mRNA"/>
</dbReference>
<dbReference type="RefSeq" id="NP_001105468.1">
    <property type="nucleotide sequence ID" value="NM_001111998.1"/>
</dbReference>
<dbReference type="RefSeq" id="XP_008655438.1">
    <property type="nucleotide sequence ID" value="XM_008657216.1"/>
</dbReference>
<dbReference type="SMR" id="Q41807"/>
<dbReference type="FunCoup" id="Q41807">
    <property type="interactions" value="3195"/>
</dbReference>
<dbReference type="STRING" id="4577.Q41807"/>
<dbReference type="PaxDb" id="4577-GRMZM2G073888_P02"/>
<dbReference type="GeneID" id="542436"/>
<dbReference type="KEGG" id="zma:542436"/>
<dbReference type="eggNOG" id="KOG1374">
    <property type="taxonomic scope" value="Eukaryota"/>
</dbReference>
<dbReference type="InParanoid" id="Q41807"/>
<dbReference type="OrthoDB" id="10249382at2759"/>
<dbReference type="Proteomes" id="UP000007305">
    <property type="component" value="Unplaced"/>
</dbReference>
<dbReference type="ExpressionAtlas" id="Q41807">
    <property type="expression patterns" value="baseline and differential"/>
</dbReference>
<dbReference type="GO" id="GO:0005737">
    <property type="term" value="C:cytoplasm"/>
    <property type="evidence" value="ECO:0007669"/>
    <property type="project" value="UniProtKB-KW"/>
</dbReference>
<dbReference type="GO" id="GO:0000931">
    <property type="term" value="C:gamma-tubulin ring complex"/>
    <property type="evidence" value="ECO:0000318"/>
    <property type="project" value="GO_Central"/>
</dbReference>
<dbReference type="GO" id="GO:0005874">
    <property type="term" value="C:microtubule"/>
    <property type="evidence" value="ECO:0007669"/>
    <property type="project" value="UniProtKB-KW"/>
</dbReference>
<dbReference type="GO" id="GO:0005634">
    <property type="term" value="C:nucleus"/>
    <property type="evidence" value="ECO:0000318"/>
    <property type="project" value="GO_Central"/>
</dbReference>
<dbReference type="GO" id="GO:0005819">
    <property type="term" value="C:spindle"/>
    <property type="evidence" value="ECO:0000318"/>
    <property type="project" value="GO_Central"/>
</dbReference>
<dbReference type="GO" id="GO:0005525">
    <property type="term" value="F:GTP binding"/>
    <property type="evidence" value="ECO:0000318"/>
    <property type="project" value="GO_Central"/>
</dbReference>
<dbReference type="GO" id="GO:0140490">
    <property type="term" value="F:microtubule nucleator activity"/>
    <property type="evidence" value="ECO:0000318"/>
    <property type="project" value="GO_Central"/>
</dbReference>
<dbReference type="GO" id="GO:0031122">
    <property type="term" value="P:cytoplasmic microtubule organization"/>
    <property type="evidence" value="ECO:0007669"/>
    <property type="project" value="InterPro"/>
</dbReference>
<dbReference type="GO" id="GO:0000212">
    <property type="term" value="P:meiotic spindle organization"/>
    <property type="evidence" value="ECO:0000318"/>
    <property type="project" value="GO_Central"/>
</dbReference>
<dbReference type="GO" id="GO:0007020">
    <property type="term" value="P:microtubule nucleation"/>
    <property type="evidence" value="ECO:0000318"/>
    <property type="project" value="GO_Central"/>
</dbReference>
<dbReference type="GO" id="GO:0000278">
    <property type="term" value="P:mitotic cell cycle"/>
    <property type="evidence" value="ECO:0000318"/>
    <property type="project" value="GO_Central"/>
</dbReference>
<dbReference type="GO" id="GO:0000070">
    <property type="term" value="P:mitotic sister chromatid segregation"/>
    <property type="evidence" value="ECO:0000318"/>
    <property type="project" value="GO_Central"/>
</dbReference>
<dbReference type="GO" id="GO:0007052">
    <property type="term" value="P:mitotic spindle organization"/>
    <property type="evidence" value="ECO:0000318"/>
    <property type="project" value="GO_Central"/>
</dbReference>
<dbReference type="CDD" id="cd02188">
    <property type="entry name" value="gamma_tubulin"/>
    <property type="match status" value="1"/>
</dbReference>
<dbReference type="FunFam" id="1.10.287.600:FF:000004">
    <property type="entry name" value="Tubulin gamma chain"/>
    <property type="match status" value="1"/>
</dbReference>
<dbReference type="FunFam" id="3.30.1330.20:FF:000003">
    <property type="entry name" value="Tubulin gamma chain"/>
    <property type="match status" value="1"/>
</dbReference>
<dbReference type="FunFam" id="3.40.50.1440:FF:000010">
    <property type="entry name" value="Tubulin gamma chain"/>
    <property type="match status" value="1"/>
</dbReference>
<dbReference type="Gene3D" id="1.10.287.600">
    <property type="entry name" value="Helix hairpin bin"/>
    <property type="match status" value="1"/>
</dbReference>
<dbReference type="Gene3D" id="3.30.1330.20">
    <property type="entry name" value="Tubulin/FtsZ, C-terminal domain"/>
    <property type="match status" value="1"/>
</dbReference>
<dbReference type="Gene3D" id="3.40.50.1440">
    <property type="entry name" value="Tubulin/FtsZ, GTPase domain"/>
    <property type="match status" value="1"/>
</dbReference>
<dbReference type="InterPro" id="IPR002454">
    <property type="entry name" value="Gamma_tubulin"/>
</dbReference>
<dbReference type="InterPro" id="IPR008280">
    <property type="entry name" value="Tub_FtsZ_C"/>
</dbReference>
<dbReference type="InterPro" id="IPR000217">
    <property type="entry name" value="Tubulin"/>
</dbReference>
<dbReference type="InterPro" id="IPR037103">
    <property type="entry name" value="Tubulin/FtsZ-like_C"/>
</dbReference>
<dbReference type="InterPro" id="IPR018316">
    <property type="entry name" value="Tubulin/FtsZ_2-layer-sand-dom"/>
</dbReference>
<dbReference type="InterPro" id="IPR036525">
    <property type="entry name" value="Tubulin/FtsZ_GTPase_sf"/>
</dbReference>
<dbReference type="InterPro" id="IPR023123">
    <property type="entry name" value="Tubulin_C"/>
</dbReference>
<dbReference type="InterPro" id="IPR017975">
    <property type="entry name" value="Tubulin_CS"/>
</dbReference>
<dbReference type="InterPro" id="IPR003008">
    <property type="entry name" value="Tubulin_FtsZ_GTPase"/>
</dbReference>
<dbReference type="PANTHER" id="PTHR11588">
    <property type="entry name" value="TUBULIN"/>
    <property type="match status" value="1"/>
</dbReference>
<dbReference type="Pfam" id="PF00091">
    <property type="entry name" value="Tubulin"/>
    <property type="match status" value="1"/>
</dbReference>
<dbReference type="Pfam" id="PF03953">
    <property type="entry name" value="Tubulin_C"/>
    <property type="match status" value="1"/>
</dbReference>
<dbReference type="PRINTS" id="PR01164">
    <property type="entry name" value="GAMMATUBULIN"/>
</dbReference>
<dbReference type="PRINTS" id="PR01161">
    <property type="entry name" value="TUBULIN"/>
</dbReference>
<dbReference type="SMART" id="SM00864">
    <property type="entry name" value="Tubulin"/>
    <property type="match status" value="1"/>
</dbReference>
<dbReference type="SMART" id="SM00865">
    <property type="entry name" value="Tubulin_C"/>
    <property type="match status" value="1"/>
</dbReference>
<dbReference type="SUPFAM" id="SSF55307">
    <property type="entry name" value="Tubulin C-terminal domain-like"/>
    <property type="match status" value="1"/>
</dbReference>
<dbReference type="SUPFAM" id="SSF52490">
    <property type="entry name" value="Tubulin nucleotide-binding domain-like"/>
    <property type="match status" value="1"/>
</dbReference>
<dbReference type="PROSITE" id="PS00227">
    <property type="entry name" value="TUBULIN"/>
    <property type="match status" value="1"/>
</dbReference>
<organism>
    <name type="scientific">Zea mays</name>
    <name type="common">Maize</name>
    <dbReference type="NCBI Taxonomy" id="4577"/>
    <lineage>
        <taxon>Eukaryota</taxon>
        <taxon>Viridiplantae</taxon>
        <taxon>Streptophyta</taxon>
        <taxon>Embryophyta</taxon>
        <taxon>Tracheophyta</taxon>
        <taxon>Spermatophyta</taxon>
        <taxon>Magnoliopsida</taxon>
        <taxon>Liliopsida</taxon>
        <taxon>Poales</taxon>
        <taxon>Poaceae</taxon>
        <taxon>PACMAD clade</taxon>
        <taxon>Panicoideae</taxon>
        <taxon>Andropogonodae</taxon>
        <taxon>Andropogoneae</taxon>
        <taxon>Tripsacinae</taxon>
        <taxon>Zea</taxon>
    </lineage>
</organism>